<gene>
    <name evidence="8" type="primary">DJA7B</name>
    <name evidence="7" type="synonym">DJA7</name>
    <name evidence="11" type="ordered locus">Os05g0334000</name>
    <name evidence="8" type="ordered locus">LOC_Os05g26926</name>
    <name evidence="9" type="ORF">OJ1005_D04.17</name>
    <name evidence="10" type="ORF">OSJNBa0049D13.3</name>
</gene>
<proteinExistence type="evidence at protein level"/>
<sequence length="447" mass="48215">MALLQFGGTLAPKLGEKPQLLPRSPALTRVIYADPRFLVSKSGSGGRLKHLVSPTASLQSRTSSRLFNHAPSPRFRHRRSSRFIVRADADFYSTLGVSRNASKSEIKSAYRKLARSYHPDVNKDPGAEQKFKDISNAYEVLSDDEKRSIYDKYGEAGLKGAGMGTGDYSNPFDLFESLFEGFGGMGGMGGRAARNRPMQGDDEAYNLVLNFKEAVFGVEKEIEITRLEGCNTCDGTGAKPGTKPTTCKTCGGQGQVVSSTRTPLGIFQQVSTCNTCGGTGEFSTPCNTCGGDGRVRKTKRISLKVPAGVDSGSRLRVRSEGNAGRRGGPPGDLYVFIDVLSDPVLKRDGTNILYTCKVSYIDAILGTTVKVPTVDGMVDLKIPSGTQPGTTLVMSKKGVPLLGKSNARGDQLVRVQVEIPKRLSSDERKLIEELANLNKAQTANSRR</sequence>
<evidence type="ECO:0000250" key="1">
    <source>
        <dbReference type="UniProtKB" id="Q96EY1"/>
    </source>
</evidence>
<evidence type="ECO:0000255" key="2"/>
<evidence type="ECO:0000255" key="3">
    <source>
        <dbReference type="PROSITE-ProRule" id="PRU00286"/>
    </source>
</evidence>
<evidence type="ECO:0000255" key="4">
    <source>
        <dbReference type="PROSITE-ProRule" id="PRU00546"/>
    </source>
</evidence>
<evidence type="ECO:0000269" key="5">
    <source>
    </source>
</evidence>
<evidence type="ECO:0000269" key="6">
    <source>
    </source>
</evidence>
<evidence type="ECO:0000303" key="7">
    <source>
    </source>
</evidence>
<evidence type="ECO:0000305" key="8"/>
<evidence type="ECO:0000312" key="9">
    <source>
        <dbReference type="EMBL" id="AAV43841.1"/>
    </source>
</evidence>
<evidence type="ECO:0000312" key="10">
    <source>
        <dbReference type="EMBL" id="AAW57780.1"/>
    </source>
</evidence>
<evidence type="ECO:0000312" key="11">
    <source>
        <dbReference type="EMBL" id="BAS93445.1"/>
    </source>
</evidence>
<accession>P0DO02</accession>
<accession>Q5W730</accession>
<protein>
    <recommendedName>
        <fullName evidence="8">Chaperone protein dnaJ A7B, chloroplastic</fullName>
    </recommendedName>
    <alternativeName>
        <fullName evidence="8">Chaperone protein dnaJ A7</fullName>
        <shortName evidence="7">OsDjA7</shortName>
    </alternativeName>
</protein>
<comment type="function">
    <text evidence="6">Plays pivotal roles in chloroplast development. Is essential for the regulation of chloroplast development and differentiation.</text>
</comment>
<comment type="subunit">
    <text evidence="5">Interacts with PCNA.</text>
</comment>
<comment type="subcellular location">
    <subcellularLocation>
        <location evidence="6">Plastid</location>
        <location evidence="6">Chloroplast</location>
    </subcellularLocation>
</comment>
<comment type="tissue specificity">
    <text evidence="6">Expressed in roots, stems, leaves and panicles.</text>
</comment>
<comment type="induction">
    <text evidence="5">Induced by UV and hydrogen peroxide. Down-regulated during sucrose starvation. Transiently down-regulated by heat shock.</text>
</comment>
<comment type="miscellaneous">
    <text evidence="6">Plants silencing DJA7 exhibit albino lethal phenotypes, display abnormal cellular structures, organelles and chloroplasts, and strong reduction of the expression of CAB1R, CAB2R, PsaA and PsbA genes, tightly associated with chloroplast development.</text>
</comment>
<comment type="similarity">
    <text evidence="8">Belongs to the DnaJ family.</text>
</comment>
<comment type="sequence caution" evidence="8">
    <conflict type="frameshift">
        <sequence resource="EMBL-CDS" id="BAB70509"/>
    </conflict>
</comment>
<organism>
    <name type="scientific">Oryza sativa subsp. japonica</name>
    <name type="common">Rice</name>
    <dbReference type="NCBI Taxonomy" id="39947"/>
    <lineage>
        <taxon>Eukaryota</taxon>
        <taxon>Viridiplantae</taxon>
        <taxon>Streptophyta</taxon>
        <taxon>Embryophyta</taxon>
        <taxon>Tracheophyta</taxon>
        <taxon>Spermatophyta</taxon>
        <taxon>Magnoliopsida</taxon>
        <taxon>Liliopsida</taxon>
        <taxon>Poales</taxon>
        <taxon>Poaceae</taxon>
        <taxon>BOP clade</taxon>
        <taxon>Oryzoideae</taxon>
        <taxon>Oryzeae</taxon>
        <taxon>Oryzinae</taxon>
        <taxon>Oryza</taxon>
        <taxon>Oryza sativa</taxon>
    </lineage>
</organism>
<feature type="transit peptide" description="Chloroplast" evidence="2">
    <location>
        <begin position="1"/>
        <end position="86"/>
    </location>
</feature>
<feature type="chain" id="PRO_0000440258" description="Chaperone protein dnaJ A7B, chloroplastic">
    <location>
        <begin position="87"/>
        <end position="447"/>
    </location>
</feature>
<feature type="domain" description="J" evidence="3">
    <location>
        <begin position="90"/>
        <end position="154"/>
    </location>
</feature>
<feature type="repeat" description="CXXCXGXG motif 1" evidence="8">
    <location>
        <begin position="230"/>
        <end position="237"/>
    </location>
</feature>
<feature type="repeat" description="CXXCXGXG motif 2" evidence="8">
    <location>
        <begin position="247"/>
        <end position="254"/>
    </location>
</feature>
<feature type="repeat" description="CXXCXGXG motif 3" evidence="8">
    <location>
        <begin position="273"/>
        <end position="280"/>
    </location>
</feature>
<feature type="repeat" description="CXXCXGXG motif 4" evidence="8">
    <location>
        <begin position="286"/>
        <end position="293"/>
    </location>
</feature>
<feature type="zinc finger region" description="CR-type" evidence="4">
    <location>
        <begin position="217"/>
        <end position="298"/>
    </location>
</feature>
<feature type="binding site" evidence="1">
    <location>
        <position position="230"/>
    </location>
    <ligand>
        <name>Zn(2+)</name>
        <dbReference type="ChEBI" id="CHEBI:29105"/>
        <label>1</label>
    </ligand>
</feature>
<feature type="binding site" evidence="1">
    <location>
        <position position="233"/>
    </location>
    <ligand>
        <name>Zn(2+)</name>
        <dbReference type="ChEBI" id="CHEBI:29105"/>
        <label>1</label>
    </ligand>
</feature>
<feature type="binding site" evidence="1">
    <location>
        <position position="247"/>
    </location>
    <ligand>
        <name>Zn(2+)</name>
        <dbReference type="ChEBI" id="CHEBI:29105"/>
        <label>2</label>
    </ligand>
</feature>
<feature type="binding site" evidence="1">
    <location>
        <position position="250"/>
    </location>
    <ligand>
        <name>Zn(2+)</name>
        <dbReference type="ChEBI" id="CHEBI:29105"/>
        <label>2</label>
    </ligand>
</feature>
<feature type="binding site" evidence="1">
    <location>
        <position position="273"/>
    </location>
    <ligand>
        <name>Zn(2+)</name>
        <dbReference type="ChEBI" id="CHEBI:29105"/>
        <label>2</label>
    </ligand>
</feature>
<feature type="binding site" evidence="1">
    <location>
        <position position="276"/>
    </location>
    <ligand>
        <name>Zn(2+)</name>
        <dbReference type="ChEBI" id="CHEBI:29105"/>
        <label>2</label>
    </ligand>
</feature>
<feature type="binding site" evidence="1">
    <location>
        <position position="286"/>
    </location>
    <ligand>
        <name>Zn(2+)</name>
        <dbReference type="ChEBI" id="CHEBI:29105"/>
        <label>1</label>
    </ligand>
</feature>
<feature type="binding site" evidence="1">
    <location>
        <position position="289"/>
    </location>
    <ligand>
        <name>Zn(2+)</name>
        <dbReference type="ChEBI" id="CHEBI:29105"/>
        <label>1</label>
    </ligand>
</feature>
<dbReference type="EMBL" id="AB055405">
    <property type="protein sequence ID" value="BAB70509.1"/>
    <property type="status" value="ALT_FRAME"/>
    <property type="molecule type" value="mRNA"/>
</dbReference>
<dbReference type="EMBL" id="AC117264">
    <property type="protein sequence ID" value="AAV43841.1"/>
    <property type="molecule type" value="Genomic_DNA"/>
</dbReference>
<dbReference type="EMBL" id="AC144739">
    <property type="protein sequence ID" value="AAW57780.1"/>
    <property type="molecule type" value="Genomic_DNA"/>
</dbReference>
<dbReference type="EMBL" id="AP014961">
    <property type="protein sequence ID" value="BAS93445.1"/>
    <property type="molecule type" value="Genomic_DNA"/>
</dbReference>
<dbReference type="RefSeq" id="XP_015639179.1">
    <property type="nucleotide sequence ID" value="XM_015783693.1"/>
</dbReference>
<dbReference type="RefSeq" id="XP_015639180.1">
    <property type="nucleotide sequence ID" value="XM_015783694.1"/>
</dbReference>
<dbReference type="SMR" id="P0DO02"/>
<dbReference type="FunCoup" id="P0DO02">
    <property type="interactions" value="305"/>
</dbReference>
<dbReference type="STRING" id="39947.P0DO02"/>
<dbReference type="PaxDb" id="39947-P0DO02"/>
<dbReference type="EnsemblPlants" id="Os05t0333500-01">
    <property type="protein sequence ID" value="Os05t0333500-01"/>
    <property type="gene ID" value="Os05g0333500"/>
</dbReference>
<dbReference type="EnsemblPlants" id="Os05t0333500-02">
    <property type="protein sequence ID" value="Os05t0333500-02"/>
    <property type="gene ID" value="Os05g0333500"/>
</dbReference>
<dbReference type="EnsemblPlants" id="Os05t0334000-01">
    <property type="protein sequence ID" value="Os05t0334000-01"/>
    <property type="gene ID" value="Os05g0334000"/>
</dbReference>
<dbReference type="EnsemblPlants" id="Os05t0334000-02">
    <property type="protein sequence ID" value="Os05t0334000-02"/>
    <property type="gene ID" value="Os05g0334000"/>
</dbReference>
<dbReference type="EnsemblPlants" id="Os05t0334400-01">
    <property type="protein sequence ID" value="Os05t0334400-01"/>
    <property type="gene ID" value="Os05g0334400"/>
</dbReference>
<dbReference type="GeneID" id="107275576"/>
<dbReference type="GeneID" id="4338449"/>
<dbReference type="Gramene" id="Os05t0333500-01">
    <property type="protein sequence ID" value="Os05t0333500-01"/>
    <property type="gene ID" value="Os05g0333500"/>
</dbReference>
<dbReference type="Gramene" id="Os05t0333500-02">
    <property type="protein sequence ID" value="Os05t0333500-02"/>
    <property type="gene ID" value="Os05g0333500"/>
</dbReference>
<dbReference type="Gramene" id="Os05t0334000-01">
    <property type="protein sequence ID" value="Os05t0334000-01"/>
    <property type="gene ID" value="Os05g0334000"/>
</dbReference>
<dbReference type="Gramene" id="Os05t0334000-02">
    <property type="protein sequence ID" value="Os05t0334000-02"/>
    <property type="gene ID" value="Os05g0334000"/>
</dbReference>
<dbReference type="Gramene" id="Os05t0334400-01">
    <property type="protein sequence ID" value="Os05t0334400-01"/>
    <property type="gene ID" value="Os05g0334400"/>
</dbReference>
<dbReference type="KEGG" id="osa:107275576"/>
<dbReference type="KEGG" id="osa:4338449"/>
<dbReference type="KEGG" id="osa:4338452"/>
<dbReference type="InParanoid" id="P0DO02"/>
<dbReference type="OMA" id="MATDYYA"/>
<dbReference type="OrthoDB" id="10256793at2759"/>
<dbReference type="Proteomes" id="UP000000763">
    <property type="component" value="Chromosome 5"/>
</dbReference>
<dbReference type="Proteomes" id="UP000059680">
    <property type="component" value="Chromosome 5"/>
</dbReference>
<dbReference type="ExpressionAtlas" id="P0DO02">
    <property type="expression patterns" value="baseline"/>
</dbReference>
<dbReference type="GO" id="GO:0009507">
    <property type="term" value="C:chloroplast"/>
    <property type="evidence" value="ECO:0007669"/>
    <property type="project" value="UniProtKB-SubCell"/>
</dbReference>
<dbReference type="GO" id="GO:0005783">
    <property type="term" value="C:endoplasmic reticulum"/>
    <property type="evidence" value="ECO:0007669"/>
    <property type="project" value="UniProtKB-ARBA"/>
</dbReference>
<dbReference type="GO" id="GO:0005524">
    <property type="term" value="F:ATP binding"/>
    <property type="evidence" value="ECO:0007669"/>
    <property type="project" value="InterPro"/>
</dbReference>
<dbReference type="GO" id="GO:0031072">
    <property type="term" value="F:heat shock protein binding"/>
    <property type="evidence" value="ECO:0007669"/>
    <property type="project" value="InterPro"/>
</dbReference>
<dbReference type="GO" id="GO:0051082">
    <property type="term" value="F:unfolded protein binding"/>
    <property type="evidence" value="ECO:0007669"/>
    <property type="project" value="InterPro"/>
</dbReference>
<dbReference type="GO" id="GO:0008270">
    <property type="term" value="F:zinc ion binding"/>
    <property type="evidence" value="ECO:0007669"/>
    <property type="project" value="UniProtKB-KW"/>
</dbReference>
<dbReference type="GO" id="GO:0006457">
    <property type="term" value="P:protein folding"/>
    <property type="evidence" value="ECO:0007669"/>
    <property type="project" value="InterPro"/>
</dbReference>
<dbReference type="GO" id="GO:0009408">
    <property type="term" value="P:response to heat"/>
    <property type="evidence" value="ECO:0007669"/>
    <property type="project" value="InterPro"/>
</dbReference>
<dbReference type="CDD" id="cd06257">
    <property type="entry name" value="DnaJ"/>
    <property type="match status" value="1"/>
</dbReference>
<dbReference type="CDD" id="cd10747">
    <property type="entry name" value="DnaJ_C"/>
    <property type="match status" value="1"/>
</dbReference>
<dbReference type="CDD" id="cd10719">
    <property type="entry name" value="DnaJ_zf"/>
    <property type="match status" value="1"/>
</dbReference>
<dbReference type="FunFam" id="2.60.260.20:FF:000005">
    <property type="entry name" value="Chaperone protein dnaJ 1, mitochondrial"/>
    <property type="match status" value="1"/>
</dbReference>
<dbReference type="FunFam" id="1.10.287.110:FF:000037">
    <property type="entry name" value="Chaperone protein dnaJ A6 chloroplastic"/>
    <property type="match status" value="1"/>
</dbReference>
<dbReference type="FunFam" id="2.10.230.10:FF:000006">
    <property type="entry name" value="Chaperone protein dnaJ A6 chloroplastic"/>
    <property type="match status" value="1"/>
</dbReference>
<dbReference type="FunFam" id="2.60.260.20:FF:000009">
    <property type="entry name" value="Putative Mitochondrial DnaJ chaperone"/>
    <property type="match status" value="1"/>
</dbReference>
<dbReference type="Gene3D" id="1.10.287.110">
    <property type="entry name" value="DnaJ domain"/>
    <property type="match status" value="1"/>
</dbReference>
<dbReference type="Gene3D" id="2.10.230.10">
    <property type="entry name" value="Heat shock protein DnaJ, cysteine-rich domain"/>
    <property type="match status" value="1"/>
</dbReference>
<dbReference type="Gene3D" id="2.60.260.20">
    <property type="entry name" value="Urease metallochaperone UreE, N-terminal domain"/>
    <property type="match status" value="2"/>
</dbReference>
<dbReference type="HAMAP" id="MF_01152">
    <property type="entry name" value="DnaJ"/>
    <property type="match status" value="1"/>
</dbReference>
<dbReference type="InterPro" id="IPR012724">
    <property type="entry name" value="DnaJ"/>
</dbReference>
<dbReference type="InterPro" id="IPR002939">
    <property type="entry name" value="DnaJ_C"/>
</dbReference>
<dbReference type="InterPro" id="IPR001623">
    <property type="entry name" value="DnaJ_domain"/>
</dbReference>
<dbReference type="InterPro" id="IPR018253">
    <property type="entry name" value="DnaJ_domain_CS"/>
</dbReference>
<dbReference type="InterPro" id="IPR008971">
    <property type="entry name" value="HSP40/DnaJ_pept-bd"/>
</dbReference>
<dbReference type="InterPro" id="IPR001305">
    <property type="entry name" value="HSP_DnaJ_Cys-rich_dom"/>
</dbReference>
<dbReference type="InterPro" id="IPR036410">
    <property type="entry name" value="HSP_DnaJ_Cys-rich_dom_sf"/>
</dbReference>
<dbReference type="InterPro" id="IPR036869">
    <property type="entry name" value="J_dom_sf"/>
</dbReference>
<dbReference type="NCBIfam" id="TIGR02349">
    <property type="entry name" value="DnaJ_bact"/>
    <property type="match status" value="1"/>
</dbReference>
<dbReference type="NCBIfam" id="NF008035">
    <property type="entry name" value="PRK10767.1"/>
    <property type="match status" value="1"/>
</dbReference>
<dbReference type="PANTHER" id="PTHR43096:SF10">
    <property type="entry name" value="CHAPERONE PROTEIN DNAJ A6, CHLOROPLASTIC"/>
    <property type="match status" value="1"/>
</dbReference>
<dbReference type="PANTHER" id="PTHR43096">
    <property type="entry name" value="DNAJ HOMOLOG 1, MITOCHONDRIAL-RELATED"/>
    <property type="match status" value="1"/>
</dbReference>
<dbReference type="Pfam" id="PF00226">
    <property type="entry name" value="DnaJ"/>
    <property type="match status" value="1"/>
</dbReference>
<dbReference type="Pfam" id="PF01556">
    <property type="entry name" value="DnaJ_C"/>
    <property type="match status" value="1"/>
</dbReference>
<dbReference type="Pfam" id="PF00684">
    <property type="entry name" value="DnaJ_CXXCXGXG"/>
    <property type="match status" value="1"/>
</dbReference>
<dbReference type="PRINTS" id="PR00625">
    <property type="entry name" value="JDOMAIN"/>
</dbReference>
<dbReference type="SMART" id="SM00271">
    <property type="entry name" value="DnaJ"/>
    <property type="match status" value="1"/>
</dbReference>
<dbReference type="SUPFAM" id="SSF46565">
    <property type="entry name" value="Chaperone J-domain"/>
    <property type="match status" value="1"/>
</dbReference>
<dbReference type="SUPFAM" id="SSF57938">
    <property type="entry name" value="DnaJ/Hsp40 cysteine-rich domain"/>
    <property type="match status" value="1"/>
</dbReference>
<dbReference type="SUPFAM" id="SSF49493">
    <property type="entry name" value="HSP40/DnaJ peptide-binding domain"/>
    <property type="match status" value="2"/>
</dbReference>
<dbReference type="PROSITE" id="PS00636">
    <property type="entry name" value="DNAJ_1"/>
    <property type="match status" value="1"/>
</dbReference>
<dbReference type="PROSITE" id="PS50076">
    <property type="entry name" value="DNAJ_2"/>
    <property type="match status" value="1"/>
</dbReference>
<dbReference type="PROSITE" id="PS51188">
    <property type="entry name" value="ZF_CR"/>
    <property type="match status" value="1"/>
</dbReference>
<reference key="1">
    <citation type="journal article" date="2005" name="J. Plant Res.">
        <title>Interaction between proliferating cell nuclear antigen (PCNA) and a DnaJ induced by DNA damage.</title>
        <authorList>
            <person name="Yamamoto T."/>
            <person name="Mori Y."/>
            <person name="Ishibashi T."/>
            <person name="Uchiyama Y."/>
            <person name="Ueda T."/>
            <person name="Ando T."/>
            <person name="Hashimoto J."/>
            <person name="Kimura S."/>
            <person name="Sakaguchi K."/>
        </authorList>
    </citation>
    <scope>NUCLEOTIDE SEQUENCE [MRNA]</scope>
    <scope>INTERACTION WITH PCNA</scope>
    <scope>INDUCTION</scope>
</reference>
<reference key="2">
    <citation type="journal article" date="2005" name="Mol. Genet. Genomics">
        <title>A fine physical map of the rice chromosome 5.</title>
        <authorList>
            <person name="Cheng C.-H."/>
            <person name="Chung M.C."/>
            <person name="Liu S.-M."/>
            <person name="Chen S.-K."/>
            <person name="Kao F.Y."/>
            <person name="Lin S.-J."/>
            <person name="Hsiao S.-H."/>
            <person name="Tseng I.C."/>
            <person name="Hsing Y.-I.C."/>
            <person name="Wu H.-P."/>
            <person name="Chen C.-S."/>
            <person name="Shaw J.-F."/>
            <person name="Wu J."/>
            <person name="Matsumoto T."/>
            <person name="Sasaki T."/>
            <person name="Chen H.-C."/>
            <person name="Chow T.-Y."/>
        </authorList>
    </citation>
    <scope>NUCLEOTIDE SEQUENCE [LARGE SCALE GENOMIC DNA]</scope>
    <source>
        <strain>cv. Nipponbare</strain>
    </source>
</reference>
<reference key="3">
    <citation type="journal article" date="2005" name="Nature">
        <title>The map-based sequence of the rice genome.</title>
        <authorList>
            <consortium name="International rice genome sequencing project (IRGSP)"/>
        </authorList>
    </citation>
    <scope>NUCLEOTIDE SEQUENCE [LARGE SCALE GENOMIC DNA]</scope>
    <source>
        <strain>cv. Nipponbare</strain>
    </source>
</reference>
<reference key="4">
    <citation type="journal article" date="2013" name="Rice">
        <title>Improvement of the Oryza sativa Nipponbare reference genome using next generation sequence and optical map data.</title>
        <authorList>
            <person name="Kawahara Y."/>
            <person name="de la Bastide M."/>
            <person name="Hamilton J.P."/>
            <person name="Kanamori H."/>
            <person name="McCombie W.R."/>
            <person name="Ouyang S."/>
            <person name="Schwartz D.C."/>
            <person name="Tanaka T."/>
            <person name="Wu J."/>
            <person name="Zhou S."/>
            <person name="Childs K.L."/>
            <person name="Davidson R.M."/>
            <person name="Lin H."/>
            <person name="Quesada-Ocampo L."/>
            <person name="Vaillancourt B."/>
            <person name="Sakai H."/>
            <person name="Lee S.S."/>
            <person name="Kim J."/>
            <person name="Numa H."/>
            <person name="Itoh T."/>
            <person name="Buell C.R."/>
            <person name="Matsumoto T."/>
        </authorList>
    </citation>
    <scope>GENOME REANNOTATION</scope>
    <source>
        <strain>cv. Nipponbare</strain>
    </source>
</reference>
<reference key="5">
    <citation type="journal article" date="2013" name="Cell Stress Chaperones">
        <title>Functional relevance of J-protein family of rice (Oryza sativa).</title>
        <authorList>
            <person name="Sarkar N.K."/>
            <person name="Thapar U."/>
            <person name="Kundnani P."/>
            <person name="Panwar P."/>
            <person name="Grover A."/>
        </authorList>
    </citation>
    <scope>GENE FAMILY</scope>
    <scope>NOMENCLATURE</scope>
</reference>
<reference key="6">
    <citation type="journal article" date="2015" name="Gene">
        <title>The DnaJ OsDjA7/8 is essential for chloroplast development in rice (Oryza sativa).</title>
        <authorList>
            <person name="Zhu X."/>
            <person name="Liang S."/>
            <person name="Yin J."/>
            <person name="Yuan C."/>
            <person name="Wang J."/>
            <person name="Li W."/>
            <person name="He M."/>
            <person name="Wang J."/>
            <person name="Chen W."/>
            <person name="Ma B."/>
            <person name="Wang Y."/>
            <person name="Qin P."/>
            <person name="Li S."/>
            <person name="Chen X."/>
        </authorList>
    </citation>
    <scope>FUNCTION</scope>
    <scope>SUBCELLULAR LOCATION</scope>
    <scope>TISSUE SPECIFICITY</scope>
</reference>
<keyword id="KW-0150">Chloroplast</keyword>
<keyword id="KW-0479">Metal-binding</keyword>
<keyword id="KW-0934">Plastid</keyword>
<keyword id="KW-1185">Reference proteome</keyword>
<keyword id="KW-0677">Repeat</keyword>
<keyword id="KW-0809">Transit peptide</keyword>
<keyword id="KW-0862">Zinc</keyword>
<keyword id="KW-0863">Zinc-finger</keyword>
<name>DJA7B_ORYSJ</name>